<comment type="function">
    <text evidence="2">Tubulin-folding protein; involved in the second step of the tubulin folding pathway and in the regulation of tubulin heterodimer dissociation. Required for correct organization of microtubule cytoskeleton and mitotic splindle, and maintenance of the neuronal microtubule network.</text>
</comment>
<comment type="subunit">
    <text evidence="2 3">Supercomplex made of cofactors A to E. Cofactors A and D function by capturing and stabilizing tubulin in a quasi-native conformation. Cofactor E binds to the cofactor D-tubulin complex; interaction with cofactor C then causes the release of tubulin polypeptides that are committed to the native state. Cofactors B and E can form a heterodimer which binds to alpha-tubulin and enhances their ability to dissociate tubulin heterodimers (By similarity). Interacts with TBCD (By similarity).</text>
</comment>
<comment type="subcellular location">
    <subcellularLocation>
        <location evidence="1">Cytoplasm</location>
    </subcellularLocation>
    <subcellularLocation>
        <location evidence="1">Cytoplasm</location>
        <location evidence="1">Cytoskeleton</location>
    </subcellularLocation>
</comment>
<comment type="similarity">
    <text evidence="5">Belongs to the TBCE family.</text>
</comment>
<gene>
    <name type="primary">Tbce</name>
</gene>
<reference key="1">
    <citation type="journal article" date="2004" name="Genome Res.">
        <title>The status, quality, and expansion of the NIH full-length cDNA project: the Mammalian Gene Collection (MGC).</title>
        <authorList>
            <consortium name="The MGC Project Team"/>
        </authorList>
    </citation>
    <scope>NUCLEOTIDE SEQUENCE [LARGE SCALE MRNA]</scope>
    <source>
        <tissue>Liver</tissue>
    </source>
</reference>
<sequence>MSDILPLDVIGRRVEVNGEYATVRFCGAVPPVAGLWLGVEWDNPERGKHDGSHEGTMYFKCRHPTGGSFVRPNIVNFGEDFLTALKKRYVLTDGPDDDEKSCSLKVGSKQVQTIGFEHITKKQSQLRSLQDISLWKCAVSCAGERGRIAEACPNIRVVDLSKNLLSTWDEVILIAEQLKDLEALDLSENKLQFPSDSPTLTRTFSTLKTLVLNKTGITWTEVLHCAPSWPVLQELYLKSNGISISERPVNALQNLRLLDLSSNPSIDESQLCLIAYLPRLEHLLLSDIGLSSIHFPDAEIGCKTSMFPALTYLIVNDNQISEWSFINELDKLQSLQALSCARNPLTKGDKAEEIIIAKIGQLKTLNRCQILPEERRGAELDYRKAFGKEWRKAGGHPDPDRNRPSAEFLSAHPRYQLLCCKYGAPEDEELKTQQPFMLKNQLLTLKIKCSNQPEQQILEKQLPDSMTIQKVKGLLSRLLKVPVSELLLSYESSKMPGREIELENDLQPLQFYSVENGDCLLVRW</sequence>
<keyword id="KW-0007">Acetylation</keyword>
<keyword id="KW-0143">Chaperone</keyword>
<keyword id="KW-0963">Cytoplasm</keyword>
<keyword id="KW-0206">Cytoskeleton</keyword>
<keyword id="KW-0433">Leucine-rich repeat</keyword>
<keyword id="KW-0597">Phosphoprotein</keyword>
<keyword id="KW-1185">Reference proteome</keyword>
<keyword id="KW-0677">Repeat</keyword>
<accession>Q5FVQ9</accession>
<proteinExistence type="evidence at transcript level"/>
<feature type="initiator methionine" description="Removed" evidence="2">
    <location>
        <position position="1"/>
    </location>
</feature>
<feature type="chain" id="PRO_0000083541" description="Tubulin-specific chaperone E">
    <location>
        <begin position="2"/>
        <end position="524"/>
    </location>
</feature>
<feature type="domain" description="CAP-Gly" evidence="4">
    <location>
        <begin position="27"/>
        <end position="71"/>
    </location>
</feature>
<feature type="repeat" description="LRR 1">
    <location>
        <begin position="154"/>
        <end position="175"/>
    </location>
</feature>
<feature type="repeat" description="LRR 2">
    <location>
        <begin position="180"/>
        <end position="201"/>
    </location>
</feature>
<feature type="repeat" description="LRR 3">
    <location>
        <begin position="206"/>
        <end position="227"/>
    </location>
</feature>
<feature type="repeat" description="LRR 4">
    <location>
        <begin position="231"/>
        <end position="253"/>
    </location>
</feature>
<feature type="repeat" description="LRR 5">
    <location>
        <begin position="254"/>
        <end position="273"/>
    </location>
</feature>
<feature type="repeat" description="LRR 6">
    <location>
        <begin position="279"/>
        <end position="300"/>
    </location>
</feature>
<feature type="repeat" description="LRR 7">
    <location>
        <begin position="309"/>
        <end position="330"/>
    </location>
</feature>
<feature type="domain" description="LRRCT">
    <location>
        <begin position="343"/>
        <end position="381"/>
    </location>
</feature>
<feature type="modified residue" description="N-acetylserine" evidence="2">
    <location>
        <position position="2"/>
    </location>
</feature>
<feature type="modified residue" description="N6-acetyllysine" evidence="2">
    <location>
        <position position="460"/>
    </location>
</feature>
<feature type="modified residue" description="Phosphoserine" evidence="2">
    <location>
        <position position="492"/>
    </location>
</feature>
<protein>
    <recommendedName>
        <fullName>Tubulin-specific chaperone E</fullName>
    </recommendedName>
    <alternativeName>
        <fullName>Tubulin-folding cofactor E</fullName>
    </alternativeName>
</protein>
<evidence type="ECO:0000250" key="1"/>
<evidence type="ECO:0000250" key="2">
    <source>
        <dbReference type="UniProtKB" id="Q15813"/>
    </source>
</evidence>
<evidence type="ECO:0000250" key="3">
    <source>
        <dbReference type="UniProtKB" id="Q8CIV8"/>
    </source>
</evidence>
<evidence type="ECO:0000255" key="4">
    <source>
        <dbReference type="PROSITE-ProRule" id="PRU00045"/>
    </source>
</evidence>
<evidence type="ECO:0000305" key="5"/>
<dbReference type="EMBL" id="BC089833">
    <property type="protein sequence ID" value="AAH89833.1"/>
    <property type="molecule type" value="mRNA"/>
</dbReference>
<dbReference type="RefSeq" id="NP_001012161.1">
    <property type="nucleotide sequence ID" value="NM_001012161.1"/>
</dbReference>
<dbReference type="SMR" id="Q5FVQ9"/>
<dbReference type="FunCoup" id="Q5FVQ9">
    <property type="interactions" value="3733"/>
</dbReference>
<dbReference type="IntAct" id="Q5FVQ9">
    <property type="interactions" value="1"/>
</dbReference>
<dbReference type="STRING" id="10116.ENSRNOP00000071747"/>
<dbReference type="iPTMnet" id="Q5FVQ9"/>
<dbReference type="PhosphoSitePlus" id="Q5FVQ9"/>
<dbReference type="jPOST" id="Q5FVQ9"/>
<dbReference type="PaxDb" id="10116-ENSRNOP00000042689"/>
<dbReference type="Ensembl" id="ENSRNOT00000040743.5">
    <property type="protein sequence ID" value="ENSRNOP00000042689.3"/>
    <property type="gene ID" value="ENSRNOG00000029667.5"/>
</dbReference>
<dbReference type="GeneID" id="361255"/>
<dbReference type="KEGG" id="rno:361255"/>
<dbReference type="UCSC" id="RGD:1305533">
    <property type="organism name" value="rat"/>
</dbReference>
<dbReference type="AGR" id="RGD:1305533"/>
<dbReference type="CTD" id="6905"/>
<dbReference type="RGD" id="1305533">
    <property type="gene designation" value="Tbce"/>
</dbReference>
<dbReference type="eggNOG" id="KOG3207">
    <property type="taxonomic scope" value="Eukaryota"/>
</dbReference>
<dbReference type="GeneTree" id="ENSGT00530000063405"/>
<dbReference type="HOGENOM" id="CLU_017716_5_0_1"/>
<dbReference type="InParanoid" id="Q5FVQ9"/>
<dbReference type="OMA" id="SEESHMF"/>
<dbReference type="PhylomeDB" id="Q5FVQ9"/>
<dbReference type="TreeFam" id="TF313455"/>
<dbReference type="PRO" id="PR:Q5FVQ9"/>
<dbReference type="Proteomes" id="UP000002494">
    <property type="component" value="Chromosome 17"/>
</dbReference>
<dbReference type="Bgee" id="ENSRNOG00000029667">
    <property type="expression patterns" value="Expressed in thymus and 20 other cell types or tissues"/>
</dbReference>
<dbReference type="ExpressionAtlas" id="Q5FVQ9">
    <property type="expression patterns" value="baseline and differential"/>
</dbReference>
<dbReference type="GO" id="GO:0005737">
    <property type="term" value="C:cytoplasm"/>
    <property type="evidence" value="ECO:0000318"/>
    <property type="project" value="GO_Central"/>
</dbReference>
<dbReference type="GO" id="GO:0005856">
    <property type="term" value="C:cytoskeleton"/>
    <property type="evidence" value="ECO:0007669"/>
    <property type="project" value="UniProtKB-SubCell"/>
</dbReference>
<dbReference type="GO" id="GO:0043014">
    <property type="term" value="F:alpha-tubulin binding"/>
    <property type="evidence" value="ECO:0000318"/>
    <property type="project" value="GO_Central"/>
</dbReference>
<dbReference type="GO" id="GO:0008344">
    <property type="term" value="P:adult locomotory behavior"/>
    <property type="evidence" value="ECO:0000266"/>
    <property type="project" value="RGD"/>
</dbReference>
<dbReference type="GO" id="GO:0007409">
    <property type="term" value="P:axonogenesis"/>
    <property type="evidence" value="ECO:0000266"/>
    <property type="project" value="RGD"/>
</dbReference>
<dbReference type="GO" id="GO:0048589">
    <property type="term" value="P:developmental growth"/>
    <property type="evidence" value="ECO:0000266"/>
    <property type="project" value="RGD"/>
</dbReference>
<dbReference type="GO" id="GO:0000226">
    <property type="term" value="P:microtubule cytoskeleton organization"/>
    <property type="evidence" value="ECO:0000250"/>
    <property type="project" value="UniProtKB"/>
</dbReference>
<dbReference type="GO" id="GO:0007052">
    <property type="term" value="P:mitotic spindle organization"/>
    <property type="evidence" value="ECO:0000250"/>
    <property type="project" value="UniProtKB"/>
</dbReference>
<dbReference type="GO" id="GO:0014889">
    <property type="term" value="P:muscle atrophy"/>
    <property type="evidence" value="ECO:0000266"/>
    <property type="project" value="RGD"/>
</dbReference>
<dbReference type="GO" id="GO:0048936">
    <property type="term" value="P:peripheral nervous system neuron axonogenesis"/>
    <property type="evidence" value="ECO:0000266"/>
    <property type="project" value="RGD"/>
</dbReference>
<dbReference type="GO" id="GO:0007023">
    <property type="term" value="P:post-chaperonin tubulin folding pathway"/>
    <property type="evidence" value="ECO:0000250"/>
    <property type="project" value="UniProtKB"/>
</dbReference>
<dbReference type="GO" id="GO:0009791">
    <property type="term" value="P:post-embryonic development"/>
    <property type="evidence" value="ECO:0000266"/>
    <property type="project" value="RGD"/>
</dbReference>
<dbReference type="GO" id="GO:0007021">
    <property type="term" value="P:tubulin complex assembly"/>
    <property type="evidence" value="ECO:0000318"/>
    <property type="project" value="GO_Central"/>
</dbReference>
<dbReference type="CDD" id="cd17044">
    <property type="entry name" value="Ubl_TBCE"/>
    <property type="match status" value="1"/>
</dbReference>
<dbReference type="FunFam" id="2.30.30.190:FF:000008">
    <property type="entry name" value="Tubulin-specific chaperone E"/>
    <property type="match status" value="1"/>
</dbReference>
<dbReference type="FunFam" id="3.10.20.90:FF:000173">
    <property type="entry name" value="Tubulin-specific chaperone E"/>
    <property type="match status" value="1"/>
</dbReference>
<dbReference type="FunFam" id="3.80.10.10:FF:000268">
    <property type="entry name" value="Tubulin-specific chaperone E"/>
    <property type="match status" value="1"/>
</dbReference>
<dbReference type="FunFam" id="3.80.10.10:FF:000593">
    <property type="entry name" value="Tubulin-specific chaperone E"/>
    <property type="match status" value="1"/>
</dbReference>
<dbReference type="Gene3D" id="2.30.30.190">
    <property type="entry name" value="CAP Gly-rich-like domain"/>
    <property type="match status" value="1"/>
</dbReference>
<dbReference type="Gene3D" id="3.10.20.90">
    <property type="entry name" value="Phosphatidylinositol 3-kinase Catalytic Subunit, Chain A, domain 1"/>
    <property type="match status" value="1"/>
</dbReference>
<dbReference type="Gene3D" id="3.80.10.10">
    <property type="entry name" value="Ribonuclease Inhibitor"/>
    <property type="match status" value="2"/>
</dbReference>
<dbReference type="InterPro" id="IPR036859">
    <property type="entry name" value="CAP-Gly_dom_sf"/>
</dbReference>
<dbReference type="InterPro" id="IPR000938">
    <property type="entry name" value="CAP-Gly_domain"/>
</dbReference>
<dbReference type="InterPro" id="IPR032675">
    <property type="entry name" value="LRR_dom_sf"/>
</dbReference>
<dbReference type="InterPro" id="IPR000626">
    <property type="entry name" value="Ubiquitin-like_dom"/>
</dbReference>
<dbReference type="InterPro" id="IPR029071">
    <property type="entry name" value="Ubiquitin-like_domsf"/>
</dbReference>
<dbReference type="InterPro" id="IPR044079">
    <property type="entry name" value="Ubl_TBCE"/>
</dbReference>
<dbReference type="PANTHER" id="PTHR18849:SF0">
    <property type="entry name" value="CILIA- AND FLAGELLA-ASSOCIATED PROTEIN 410-RELATED"/>
    <property type="match status" value="1"/>
</dbReference>
<dbReference type="PANTHER" id="PTHR18849">
    <property type="entry name" value="LEUCINE RICH REPEAT PROTEIN"/>
    <property type="match status" value="1"/>
</dbReference>
<dbReference type="Pfam" id="PF01302">
    <property type="entry name" value="CAP_GLY"/>
    <property type="match status" value="1"/>
</dbReference>
<dbReference type="Pfam" id="PF14580">
    <property type="entry name" value="LRR_9"/>
    <property type="match status" value="1"/>
</dbReference>
<dbReference type="Pfam" id="PF14560">
    <property type="entry name" value="Ubiquitin_2"/>
    <property type="match status" value="1"/>
</dbReference>
<dbReference type="SMART" id="SM01052">
    <property type="entry name" value="CAP_GLY"/>
    <property type="match status" value="1"/>
</dbReference>
<dbReference type="SUPFAM" id="SSF74924">
    <property type="entry name" value="Cap-Gly domain"/>
    <property type="match status" value="1"/>
</dbReference>
<dbReference type="SUPFAM" id="SSF52058">
    <property type="entry name" value="L domain-like"/>
    <property type="match status" value="1"/>
</dbReference>
<dbReference type="SUPFAM" id="SSF54236">
    <property type="entry name" value="Ubiquitin-like"/>
    <property type="match status" value="1"/>
</dbReference>
<dbReference type="PROSITE" id="PS00845">
    <property type="entry name" value="CAP_GLY_1"/>
    <property type="match status" value="1"/>
</dbReference>
<dbReference type="PROSITE" id="PS50245">
    <property type="entry name" value="CAP_GLY_2"/>
    <property type="match status" value="1"/>
</dbReference>
<organism>
    <name type="scientific">Rattus norvegicus</name>
    <name type="common">Rat</name>
    <dbReference type="NCBI Taxonomy" id="10116"/>
    <lineage>
        <taxon>Eukaryota</taxon>
        <taxon>Metazoa</taxon>
        <taxon>Chordata</taxon>
        <taxon>Craniata</taxon>
        <taxon>Vertebrata</taxon>
        <taxon>Euteleostomi</taxon>
        <taxon>Mammalia</taxon>
        <taxon>Eutheria</taxon>
        <taxon>Euarchontoglires</taxon>
        <taxon>Glires</taxon>
        <taxon>Rodentia</taxon>
        <taxon>Myomorpha</taxon>
        <taxon>Muroidea</taxon>
        <taxon>Muridae</taxon>
        <taxon>Murinae</taxon>
        <taxon>Rattus</taxon>
    </lineage>
</organism>
<name>TBCE_RAT</name>